<keyword id="KW-0175">Coiled coil</keyword>
<keyword id="KW-0963">Cytoplasm</keyword>
<keyword id="KW-1017">Isopeptide bond</keyword>
<keyword id="KW-0597">Phosphoprotein</keyword>
<keyword id="KW-1185">Reference proteome</keyword>
<keyword id="KW-0804">Transcription</keyword>
<keyword id="KW-0805">Transcription regulation</keyword>
<keyword id="KW-0832">Ubl conjugation</keyword>
<reference evidence="7 9" key="1">
    <citation type="journal article" date="2004" name="J. Biol. Chem.">
        <title>Identification of a novel serum response factor cofactor in cardiac gene regulation.</title>
        <authorList>
            <person name="Zhang X."/>
            <person name="Azhar G."/>
            <person name="Zhong Y."/>
            <person name="Wei J.Y."/>
        </authorList>
    </citation>
    <scope>NUCLEOTIDE SEQUENCE [MRNA]</scope>
    <scope>FUNCTION</scope>
    <scope>INTERACTION WITH SRF</scope>
    <scope>SUBUNIT</scope>
    <scope>TISSUE SPECIFICITY</scope>
    <scope>DEVELOPMENTAL STAGE</scope>
    <source>
        <strain evidence="9">C57BL/6J</strain>
        <tissue evidence="9">Heart</tissue>
    </source>
</reference>
<reference evidence="10" key="2">
    <citation type="journal article" date="2005" name="Science">
        <title>The transcriptional landscape of the mammalian genome.</title>
        <authorList>
            <person name="Carninci P."/>
            <person name="Kasukawa T."/>
            <person name="Katayama S."/>
            <person name="Gough J."/>
            <person name="Frith M.C."/>
            <person name="Maeda N."/>
            <person name="Oyama R."/>
            <person name="Ravasi T."/>
            <person name="Lenhard B."/>
            <person name="Wells C."/>
            <person name="Kodzius R."/>
            <person name="Shimokawa K."/>
            <person name="Bajic V.B."/>
            <person name="Brenner S.E."/>
            <person name="Batalov S."/>
            <person name="Forrest A.R."/>
            <person name="Zavolan M."/>
            <person name="Davis M.J."/>
            <person name="Wilming L.G."/>
            <person name="Aidinis V."/>
            <person name="Allen J.E."/>
            <person name="Ambesi-Impiombato A."/>
            <person name="Apweiler R."/>
            <person name="Aturaliya R.N."/>
            <person name="Bailey T.L."/>
            <person name="Bansal M."/>
            <person name="Baxter L."/>
            <person name="Beisel K.W."/>
            <person name="Bersano T."/>
            <person name="Bono H."/>
            <person name="Chalk A.M."/>
            <person name="Chiu K.P."/>
            <person name="Choudhary V."/>
            <person name="Christoffels A."/>
            <person name="Clutterbuck D.R."/>
            <person name="Crowe M.L."/>
            <person name="Dalla E."/>
            <person name="Dalrymple B.P."/>
            <person name="de Bono B."/>
            <person name="Della Gatta G."/>
            <person name="di Bernardo D."/>
            <person name="Down T."/>
            <person name="Engstrom P."/>
            <person name="Fagiolini M."/>
            <person name="Faulkner G."/>
            <person name="Fletcher C.F."/>
            <person name="Fukushima T."/>
            <person name="Furuno M."/>
            <person name="Futaki S."/>
            <person name="Gariboldi M."/>
            <person name="Georgii-Hemming P."/>
            <person name="Gingeras T.R."/>
            <person name="Gojobori T."/>
            <person name="Green R.E."/>
            <person name="Gustincich S."/>
            <person name="Harbers M."/>
            <person name="Hayashi Y."/>
            <person name="Hensch T.K."/>
            <person name="Hirokawa N."/>
            <person name="Hill D."/>
            <person name="Huminiecki L."/>
            <person name="Iacono M."/>
            <person name="Ikeo K."/>
            <person name="Iwama A."/>
            <person name="Ishikawa T."/>
            <person name="Jakt M."/>
            <person name="Kanapin A."/>
            <person name="Katoh M."/>
            <person name="Kawasawa Y."/>
            <person name="Kelso J."/>
            <person name="Kitamura H."/>
            <person name="Kitano H."/>
            <person name="Kollias G."/>
            <person name="Krishnan S.P."/>
            <person name="Kruger A."/>
            <person name="Kummerfeld S.K."/>
            <person name="Kurochkin I.V."/>
            <person name="Lareau L.F."/>
            <person name="Lazarevic D."/>
            <person name="Lipovich L."/>
            <person name="Liu J."/>
            <person name="Liuni S."/>
            <person name="McWilliam S."/>
            <person name="Madan Babu M."/>
            <person name="Madera M."/>
            <person name="Marchionni L."/>
            <person name="Matsuda H."/>
            <person name="Matsuzawa S."/>
            <person name="Miki H."/>
            <person name="Mignone F."/>
            <person name="Miyake S."/>
            <person name="Morris K."/>
            <person name="Mottagui-Tabar S."/>
            <person name="Mulder N."/>
            <person name="Nakano N."/>
            <person name="Nakauchi H."/>
            <person name="Ng P."/>
            <person name="Nilsson R."/>
            <person name="Nishiguchi S."/>
            <person name="Nishikawa S."/>
            <person name="Nori F."/>
            <person name="Ohara O."/>
            <person name="Okazaki Y."/>
            <person name="Orlando V."/>
            <person name="Pang K.C."/>
            <person name="Pavan W.J."/>
            <person name="Pavesi G."/>
            <person name="Pesole G."/>
            <person name="Petrovsky N."/>
            <person name="Piazza S."/>
            <person name="Reed J."/>
            <person name="Reid J.F."/>
            <person name="Ring B.Z."/>
            <person name="Ringwald M."/>
            <person name="Rost B."/>
            <person name="Ruan Y."/>
            <person name="Salzberg S.L."/>
            <person name="Sandelin A."/>
            <person name="Schneider C."/>
            <person name="Schoenbach C."/>
            <person name="Sekiguchi K."/>
            <person name="Semple C.A."/>
            <person name="Seno S."/>
            <person name="Sessa L."/>
            <person name="Sheng Y."/>
            <person name="Shibata Y."/>
            <person name="Shimada H."/>
            <person name="Shimada K."/>
            <person name="Silva D."/>
            <person name="Sinclair B."/>
            <person name="Sperling S."/>
            <person name="Stupka E."/>
            <person name="Sugiura K."/>
            <person name="Sultana R."/>
            <person name="Takenaka Y."/>
            <person name="Taki K."/>
            <person name="Tammoja K."/>
            <person name="Tan S.L."/>
            <person name="Tang S."/>
            <person name="Taylor M.S."/>
            <person name="Tegner J."/>
            <person name="Teichmann S.A."/>
            <person name="Ueda H.R."/>
            <person name="van Nimwegen E."/>
            <person name="Verardo R."/>
            <person name="Wei C.L."/>
            <person name="Yagi K."/>
            <person name="Yamanishi H."/>
            <person name="Zabarovsky E."/>
            <person name="Zhu S."/>
            <person name="Zimmer A."/>
            <person name="Hide W."/>
            <person name="Bult C."/>
            <person name="Grimmond S.M."/>
            <person name="Teasdale R.D."/>
            <person name="Liu E.T."/>
            <person name="Brusic V."/>
            <person name="Quackenbush J."/>
            <person name="Wahlestedt C."/>
            <person name="Mattick J.S."/>
            <person name="Hume D.A."/>
            <person name="Kai C."/>
            <person name="Sasaki D."/>
            <person name="Tomaru Y."/>
            <person name="Fukuda S."/>
            <person name="Kanamori-Katayama M."/>
            <person name="Suzuki M."/>
            <person name="Aoki J."/>
            <person name="Arakawa T."/>
            <person name="Iida J."/>
            <person name="Imamura K."/>
            <person name="Itoh M."/>
            <person name="Kato T."/>
            <person name="Kawaji H."/>
            <person name="Kawagashira N."/>
            <person name="Kawashima T."/>
            <person name="Kojima M."/>
            <person name="Kondo S."/>
            <person name="Konno H."/>
            <person name="Nakano K."/>
            <person name="Ninomiya N."/>
            <person name="Nishio T."/>
            <person name="Okada M."/>
            <person name="Plessy C."/>
            <person name="Shibata K."/>
            <person name="Shiraki T."/>
            <person name="Suzuki S."/>
            <person name="Tagami M."/>
            <person name="Waki K."/>
            <person name="Watahiki A."/>
            <person name="Okamura-Oho Y."/>
            <person name="Suzuki H."/>
            <person name="Kawai J."/>
            <person name="Hayashizaki Y."/>
        </authorList>
    </citation>
    <scope>NUCLEOTIDE SEQUENCE [LARGE SCALE MRNA]</scope>
    <source>
        <strain evidence="10 13">C57BL/6J</strain>
        <tissue evidence="13">Brain</tissue>
        <tissue evidence="10">Embryo</tissue>
        <tissue evidence="11">Embryonic spinal ganglion</tissue>
        <tissue evidence="12">Lung</tissue>
    </source>
</reference>
<reference evidence="8" key="3">
    <citation type="journal article" date="2004" name="Genome Res.">
        <title>The status, quality, and expansion of the NIH full-length cDNA project: the Mammalian Gene Collection (MGC).</title>
        <authorList>
            <consortium name="The MGC Project Team"/>
        </authorList>
    </citation>
    <scope>NUCLEOTIDE SEQUENCE [LARGE SCALE MRNA]</scope>
    <source>
        <strain evidence="8">FVB/N-3</strain>
        <tissue evidence="8">Mammary tumor</tissue>
    </source>
</reference>
<reference evidence="7" key="4">
    <citation type="journal article" date="2006" name="Biochem. Biophys. Res. Commun.">
        <title>Identification and characterization of p49/STRAP as a novel GLUT4-binding protein.</title>
        <authorList>
            <person name="Lisinski I."/>
            <person name="Matsumoto H."/>
            <person name="Yver D.R."/>
            <person name="Schuermann A."/>
            <person name="Cushman S.W."/>
            <person name="Al-Hasani H."/>
        </authorList>
    </citation>
    <scope>FUNCTION</scope>
    <scope>INTERACTION WITH SLC2A4</scope>
    <scope>SUBCELLULAR LOCATION</scope>
    <scope>TISSUE SPECIFICITY</scope>
</reference>
<reference evidence="7" key="5">
    <citation type="journal article" date="2006" name="Biochem. Biophys. Res. Commun.">
        <title>Zipzap/p200 is a novel zinc finger protein contributing to cardiac gene regulation.</title>
        <authorList>
            <person name="Zhang X."/>
            <person name="Azhar G."/>
            <person name="Zhong Y."/>
            <person name="Wei J.Y."/>
        </authorList>
    </citation>
    <scope>SUBUNIT</scope>
</reference>
<organism>
    <name type="scientific">Mus musculus</name>
    <name type="common">Mouse</name>
    <dbReference type="NCBI Taxonomy" id="10090"/>
    <lineage>
        <taxon>Eukaryota</taxon>
        <taxon>Metazoa</taxon>
        <taxon>Chordata</taxon>
        <taxon>Craniata</taxon>
        <taxon>Vertebrata</taxon>
        <taxon>Euteleostomi</taxon>
        <taxon>Mammalia</taxon>
        <taxon>Eutheria</taxon>
        <taxon>Euarchontoglires</taxon>
        <taxon>Glires</taxon>
        <taxon>Rodentia</taxon>
        <taxon>Myomorpha</taxon>
        <taxon>Muroidea</taxon>
        <taxon>Muridae</taxon>
        <taxon>Murinae</taxon>
        <taxon>Mus</taxon>
        <taxon>Mus</taxon>
    </lineage>
</organism>
<sequence>MAADPLPPSAMVQPGTLNLNNEVVKMRKEVKRIRVLVIRKLVRSVGRLKSKKGTEDALLKNQRRAQRLLEEIHAMKELKPDVVTKSALSDDINFEKTCKKPDSTATDRAVARLAGHPLLKKKIDVLKDAVQAFKDARQSAPAAESSESTSGEGRCKDIARSKDDARESQHPERTVVREQKAKDTNTAAKNAASGSKEKLAKTEQAPRAGTTPGSQGRPSGKGAGVNSEHQGAPAPGDSNQGKASTKTPEDSVCEPANNGVSEEEESEGEKEYFDDSTEERFYKQSSASEDSDSGDDFFIGKVRRTRKKESGVHSSAKELKPLPKVPSKTSTLETPWDVRNDKHRPIPEARKFESVFFHSLAGPKSSRRDPREQAPKNKAPDFPENEPPVKKQFTKSAYRGFESVKQTMQAPLHPSWEASRRRKEQQSKIAVFQGKKITFDD</sequence>
<proteinExistence type="evidence at protein level"/>
<accession>Q9CZ91</accession>
<accession>Q3UGY0</accession>
<accession>Q3UMK2</accession>
<accession>Q3UR20</accession>
<accession>Q8R3W6</accession>
<accession>Q9CRL0</accession>
<gene>
    <name evidence="14" type="primary">Srfbp1</name>
</gene>
<comment type="function">
    <text evidence="4 5">May be involved in regulating transcriptional activation of cardiac genes during the aging process. May play a role in biosynthesis and/or processing of SLC2A4 in adipose cells.</text>
</comment>
<comment type="subunit">
    <text evidence="4 5 6">Interacts with SRF. Forms complexes with SRF and SRF cofactors ARID2, MYOCD and NKX2-5. Interacts with the N-terminus of SLC2A4.</text>
</comment>
<comment type="subcellular location">
    <subcellularLocation>
        <location evidence="5">Cytoplasm</location>
        <location evidence="5">Perinuclear region</location>
    </subcellularLocation>
</comment>
<comment type="tissue specificity">
    <text evidence="4 5">Highly expressed in heart, skeletal muscle, liver, kidney, testis and brain. Also expressed in white adipose tissue. Expression is up-regulated in cardiomyopathic heart.</text>
</comment>
<comment type="developmental stage">
    <text evidence="4">Up-regulated in adult heart (at protein level).</text>
</comment>
<feature type="chain" id="PRO_0000320007" description="Serum response factor-binding protein 1">
    <location>
        <begin position="1"/>
        <end position="441"/>
    </location>
</feature>
<feature type="region of interest" description="Disordered" evidence="3">
    <location>
        <begin position="137"/>
        <end position="342"/>
    </location>
</feature>
<feature type="region of interest" description="Disordered" evidence="3">
    <location>
        <begin position="357"/>
        <end position="389"/>
    </location>
</feature>
<feature type="region of interest" description="Disordered" evidence="3">
    <location>
        <begin position="406"/>
        <end position="441"/>
    </location>
</feature>
<feature type="coiled-coil region" evidence="2">
    <location>
        <begin position="52"/>
        <end position="77"/>
    </location>
</feature>
<feature type="coiled-coil region" evidence="2">
    <location>
        <begin position="118"/>
        <end position="140"/>
    </location>
</feature>
<feature type="compositionally biased region" description="Low complexity" evidence="3">
    <location>
        <begin position="139"/>
        <end position="152"/>
    </location>
</feature>
<feature type="compositionally biased region" description="Basic and acidic residues" evidence="3">
    <location>
        <begin position="153"/>
        <end position="183"/>
    </location>
</feature>
<feature type="compositionally biased region" description="Polar residues" evidence="3">
    <location>
        <begin position="237"/>
        <end position="246"/>
    </location>
</feature>
<feature type="compositionally biased region" description="Basic and acidic residues" evidence="3">
    <location>
        <begin position="269"/>
        <end position="282"/>
    </location>
</feature>
<feature type="compositionally biased region" description="Basic and acidic residues" evidence="3">
    <location>
        <begin position="308"/>
        <end position="321"/>
    </location>
</feature>
<feature type="compositionally biased region" description="Basic and acidic residues" evidence="3">
    <location>
        <begin position="366"/>
        <end position="381"/>
    </location>
</feature>
<feature type="modified residue" description="Phosphoserine" evidence="1">
    <location>
        <position position="214"/>
    </location>
</feature>
<feature type="modified residue" description="Phosphoserine" evidence="1">
    <location>
        <position position="276"/>
    </location>
</feature>
<feature type="modified residue" description="Phosphoserine" evidence="1">
    <location>
        <position position="291"/>
    </location>
</feature>
<feature type="modified residue" description="Phosphoserine" evidence="1">
    <location>
        <position position="293"/>
    </location>
</feature>
<feature type="cross-link" description="Glycyl lysine isopeptide (Lys-Gly) (interchain with G-Cter in SUMO2)" evidence="1">
    <location>
        <position position="201"/>
    </location>
</feature>
<feature type="cross-link" description="Glycyl lysine isopeptide (Lys-Gly) (interchain with G-Cter in SUMO2)" evidence="1">
    <location>
        <position position="328"/>
    </location>
</feature>
<feature type="sequence conflict" description="In Ref. 2; BAE26096." evidence="7" ref="2">
    <original>R</original>
    <variation>G</variation>
    <location>
        <position position="67"/>
    </location>
</feature>
<feature type="sequence conflict" description="In Ref. 3; AAH24338." evidence="7" ref="3">
    <original>D</original>
    <variation>A</variation>
    <location>
        <position position="128"/>
    </location>
</feature>
<feature type="sequence conflict" description="In Ref. 2; BAE26096." evidence="7" ref="2">
    <original>A</original>
    <variation>V</variation>
    <location>
        <position position="132"/>
    </location>
</feature>
<feature type="sequence conflict" description="In Ref. 2; BAE24868." evidence="7" ref="2">
    <original>A</original>
    <variation>V</variation>
    <location>
        <position position="140"/>
    </location>
</feature>
<feature type="sequence conflict" description="In Ref. 3; AAH24338." evidence="7" ref="3">
    <original>C</original>
    <variation>Y</variation>
    <location>
        <position position="155"/>
    </location>
</feature>
<feature type="sequence conflict" description="In Ref. 3; AAH24338." evidence="7" ref="3">
    <original>R</original>
    <variation>S</variation>
    <location>
        <position position="166"/>
    </location>
</feature>
<feature type="sequence conflict" description="In Ref. 3; AAH24338." evidence="7" ref="3">
    <original>R</original>
    <variation>S</variation>
    <location>
        <position position="177"/>
    </location>
</feature>
<feature type="sequence conflict" description="In Ref. 3; AAH24338." evidence="7" ref="3">
    <original>A</original>
    <variation>G</variation>
    <location>
        <position position="192"/>
    </location>
</feature>
<feature type="sequence conflict" description="In Ref. 3; AAH24338." evidence="7" ref="3">
    <original>R</original>
    <variation>K</variation>
    <location>
        <position position="217"/>
    </location>
</feature>
<feature type="sequence conflict" description="In Ref. 3; AAH24338." evidence="7" ref="3">
    <original>E</original>
    <variation>A</variation>
    <location>
        <position position="249"/>
    </location>
</feature>
<feature type="sequence conflict" description="In Ref. 3; AAH24338." evidence="7" ref="3">
    <original>S</original>
    <variation>C</variation>
    <location>
        <position position="310"/>
    </location>
</feature>
<feature type="sequence conflict" description="In Ref. 2; BAE28077." evidence="7" ref="2">
    <original>R</original>
    <variation>S</variation>
    <location>
        <position position="344"/>
    </location>
</feature>
<feature type="sequence conflict" description="In Ref. 3; AAH24338." evidence="7" ref="3">
    <original>Y</original>
    <variation>H</variation>
    <location>
        <position position="398"/>
    </location>
</feature>
<feature type="sequence conflict" description="In Ref. 3; AAH24338." evidence="7" ref="3">
    <original>T</original>
    <variation>P</variation>
    <location>
        <position position="407"/>
    </location>
</feature>
<protein>
    <recommendedName>
        <fullName>Serum response factor-binding protein 1</fullName>
    </recommendedName>
    <alternativeName>
        <fullName>SRF-dependent transcription regulation-associated protein</fullName>
    </alternativeName>
    <alternativeName>
        <fullName>p49/STRAP</fullName>
    </alternativeName>
</protein>
<name>SRFB1_MOUSE</name>
<dbReference type="EMBL" id="AY611629">
    <property type="protein sequence ID" value="AAU25828.1"/>
    <property type="molecule type" value="mRNA"/>
</dbReference>
<dbReference type="EMBL" id="AK012865">
    <property type="protein sequence ID" value="BAB28520.1"/>
    <property type="molecule type" value="mRNA"/>
</dbReference>
<dbReference type="EMBL" id="AK020469">
    <property type="protein sequence ID" value="BAB32112.1"/>
    <property type="molecule type" value="mRNA"/>
</dbReference>
<dbReference type="EMBL" id="AK141882">
    <property type="protein sequence ID" value="BAE24868.1"/>
    <property type="molecule type" value="mRNA"/>
</dbReference>
<dbReference type="EMBL" id="AK144845">
    <property type="protein sequence ID" value="BAE26096.1"/>
    <property type="molecule type" value="mRNA"/>
</dbReference>
<dbReference type="EMBL" id="AK147692">
    <property type="protein sequence ID" value="BAE28077.1"/>
    <property type="molecule type" value="mRNA"/>
</dbReference>
<dbReference type="EMBL" id="BC024338">
    <property type="protein sequence ID" value="AAH24338.1"/>
    <property type="molecule type" value="mRNA"/>
</dbReference>
<dbReference type="CCDS" id="CCDS37819.1"/>
<dbReference type="RefSeq" id="NP_080316.3">
    <property type="nucleotide sequence ID" value="NM_026040.3"/>
</dbReference>
<dbReference type="SMR" id="Q9CZ91"/>
<dbReference type="BioGRID" id="212027">
    <property type="interactions" value="1"/>
</dbReference>
<dbReference type="CORUM" id="Q9CZ91"/>
<dbReference type="FunCoup" id="Q9CZ91">
    <property type="interactions" value="3770"/>
</dbReference>
<dbReference type="STRING" id="10090.ENSMUSP00000025406"/>
<dbReference type="iPTMnet" id="Q9CZ91"/>
<dbReference type="PhosphoSitePlus" id="Q9CZ91"/>
<dbReference type="jPOST" id="Q9CZ91"/>
<dbReference type="PaxDb" id="10090-ENSMUSP00000025406"/>
<dbReference type="PeptideAtlas" id="Q9CZ91"/>
<dbReference type="ProteomicsDB" id="257067"/>
<dbReference type="Pumba" id="Q9CZ91"/>
<dbReference type="Antibodypedia" id="25600">
    <property type="antibodies" value="133 antibodies from 23 providers"/>
</dbReference>
<dbReference type="DNASU" id="67222"/>
<dbReference type="Ensembl" id="ENSMUST00000025406.9">
    <property type="protein sequence ID" value="ENSMUSP00000025406.8"/>
    <property type="gene ID" value="ENSMUSG00000024528.9"/>
</dbReference>
<dbReference type="GeneID" id="67222"/>
<dbReference type="KEGG" id="mmu:67222"/>
<dbReference type="UCSC" id="uc008exd.1">
    <property type="organism name" value="mouse"/>
</dbReference>
<dbReference type="AGR" id="MGI:1914472"/>
<dbReference type="CTD" id="153443"/>
<dbReference type="MGI" id="MGI:1914472">
    <property type="gene designation" value="Srfbp1"/>
</dbReference>
<dbReference type="VEuPathDB" id="HostDB:ENSMUSG00000024528"/>
<dbReference type="eggNOG" id="ENOG502QV1I">
    <property type="taxonomic scope" value="Eukaryota"/>
</dbReference>
<dbReference type="GeneTree" id="ENSGT00390000006478"/>
<dbReference type="HOGENOM" id="CLU_054142_0_0_1"/>
<dbReference type="InParanoid" id="Q9CZ91"/>
<dbReference type="OMA" id="GFQQNEP"/>
<dbReference type="OrthoDB" id="3364872at2759"/>
<dbReference type="PhylomeDB" id="Q9CZ91"/>
<dbReference type="TreeFam" id="TF328596"/>
<dbReference type="BioGRID-ORCS" id="67222">
    <property type="hits" value="21 hits in 77 CRISPR screens"/>
</dbReference>
<dbReference type="PRO" id="PR:Q9CZ91"/>
<dbReference type="Proteomes" id="UP000000589">
    <property type="component" value="Chromosome 18"/>
</dbReference>
<dbReference type="RNAct" id="Q9CZ91">
    <property type="molecule type" value="protein"/>
</dbReference>
<dbReference type="Bgee" id="ENSMUSG00000024528">
    <property type="expression patterns" value="Expressed in undifferentiated genital tubercle and 250 other cell types or tissues"/>
</dbReference>
<dbReference type="ExpressionAtlas" id="Q9CZ91">
    <property type="expression patterns" value="baseline and differential"/>
</dbReference>
<dbReference type="GO" id="GO:0005634">
    <property type="term" value="C:nucleus"/>
    <property type="evidence" value="ECO:0000314"/>
    <property type="project" value="MGI"/>
</dbReference>
<dbReference type="GO" id="GO:0048471">
    <property type="term" value="C:perinuclear region of cytoplasm"/>
    <property type="evidence" value="ECO:0007669"/>
    <property type="project" value="UniProtKB-SubCell"/>
</dbReference>
<dbReference type="InterPro" id="IPR037393">
    <property type="entry name" value="Bud22/SRFB1"/>
</dbReference>
<dbReference type="InterPro" id="IPR015158">
    <property type="entry name" value="Bud22_dom"/>
</dbReference>
<dbReference type="PANTHER" id="PTHR23325">
    <property type="entry name" value="SERUM RESPONSE FACTOR-BINDING"/>
    <property type="match status" value="1"/>
</dbReference>
<dbReference type="PANTHER" id="PTHR23325:SF1">
    <property type="entry name" value="SERUM RESPONSE FACTOR-BINDING PROTEIN 1"/>
    <property type="match status" value="1"/>
</dbReference>
<dbReference type="Pfam" id="PF09073">
    <property type="entry name" value="BUD22"/>
    <property type="match status" value="1"/>
</dbReference>
<evidence type="ECO:0000250" key="1">
    <source>
        <dbReference type="UniProtKB" id="Q8NEF9"/>
    </source>
</evidence>
<evidence type="ECO:0000255" key="2"/>
<evidence type="ECO:0000256" key="3">
    <source>
        <dbReference type="SAM" id="MobiDB-lite"/>
    </source>
</evidence>
<evidence type="ECO:0000269" key="4">
    <source>
    </source>
</evidence>
<evidence type="ECO:0000269" key="5">
    <source>
    </source>
</evidence>
<evidence type="ECO:0000269" key="6">
    <source>
    </source>
</evidence>
<evidence type="ECO:0000305" key="7"/>
<evidence type="ECO:0000312" key="8">
    <source>
        <dbReference type="EMBL" id="AAH24338.1"/>
    </source>
</evidence>
<evidence type="ECO:0000312" key="9">
    <source>
        <dbReference type="EMBL" id="AAU25828.1"/>
    </source>
</evidence>
<evidence type="ECO:0000312" key="10">
    <source>
        <dbReference type="EMBL" id="BAB28520.1"/>
    </source>
</evidence>
<evidence type="ECO:0000312" key="11">
    <source>
        <dbReference type="EMBL" id="BAE24868.1"/>
    </source>
</evidence>
<evidence type="ECO:0000312" key="12">
    <source>
        <dbReference type="EMBL" id="BAE26096.1"/>
    </source>
</evidence>
<evidence type="ECO:0000312" key="13">
    <source>
        <dbReference type="EMBL" id="BAE28077.1"/>
    </source>
</evidence>
<evidence type="ECO:0000312" key="14">
    <source>
        <dbReference type="MGI" id="MGI:1914472"/>
    </source>
</evidence>